<gene>
    <name type="primary">rps2</name>
    <name type="ORF">SPCC576.08c</name>
</gene>
<organism>
    <name type="scientific">Schizosaccharomyces pombe (strain 972 / ATCC 24843)</name>
    <name type="common">Fission yeast</name>
    <dbReference type="NCBI Taxonomy" id="284812"/>
    <lineage>
        <taxon>Eukaryota</taxon>
        <taxon>Fungi</taxon>
        <taxon>Dikarya</taxon>
        <taxon>Ascomycota</taxon>
        <taxon>Taphrinomycotina</taxon>
        <taxon>Schizosaccharomycetes</taxon>
        <taxon>Schizosaccharomycetales</taxon>
        <taxon>Schizosaccharomycetaceae</taxon>
        <taxon>Schizosaccharomyces</taxon>
    </lineage>
</organism>
<proteinExistence type="evidence at protein level"/>
<dbReference type="EMBL" id="CU329672">
    <property type="protein sequence ID" value="CAA21187.1"/>
    <property type="molecule type" value="Genomic_DNA"/>
</dbReference>
<dbReference type="PIR" id="T41418">
    <property type="entry name" value="T41418"/>
</dbReference>
<dbReference type="RefSeq" id="NP_588435.1">
    <property type="nucleotide sequence ID" value="NM_001023426.2"/>
</dbReference>
<dbReference type="PDB" id="9AXT">
    <property type="method" value="EM"/>
    <property type="resolution" value="2.40 A"/>
    <property type="chains" value="AF=1-253"/>
</dbReference>
<dbReference type="PDB" id="9AXV">
    <property type="method" value="EM"/>
    <property type="resolution" value="2.40 A"/>
    <property type="chains" value="AF=1-253"/>
</dbReference>
<dbReference type="PDBsum" id="9AXT"/>
<dbReference type="PDBsum" id="9AXV"/>
<dbReference type="EMDB" id="EMD-43972"/>
<dbReference type="EMDB" id="EMD-43976"/>
<dbReference type="SMR" id="O74892"/>
<dbReference type="BioGRID" id="275639">
    <property type="interactions" value="13"/>
</dbReference>
<dbReference type="FunCoup" id="O74892">
    <property type="interactions" value="510"/>
</dbReference>
<dbReference type="IntAct" id="O74892">
    <property type="interactions" value="2"/>
</dbReference>
<dbReference type="STRING" id="284812.O74892"/>
<dbReference type="iPTMnet" id="O74892"/>
<dbReference type="PaxDb" id="4896-SPCC576.08c.1"/>
<dbReference type="EnsemblFungi" id="SPCC576.08c.1">
    <property type="protein sequence ID" value="SPCC576.08c.1:pep"/>
    <property type="gene ID" value="SPCC576.08c"/>
</dbReference>
<dbReference type="GeneID" id="2539067"/>
<dbReference type="KEGG" id="spo:2539067"/>
<dbReference type="PomBase" id="SPCC576.08c">
    <property type="gene designation" value="rps2"/>
</dbReference>
<dbReference type="VEuPathDB" id="FungiDB:SPCC576.08c"/>
<dbReference type="eggNOG" id="KOG0877">
    <property type="taxonomic scope" value="Eukaryota"/>
</dbReference>
<dbReference type="HOGENOM" id="CLU_065898_0_2_1"/>
<dbReference type="InParanoid" id="O74892"/>
<dbReference type="OMA" id="PYEEWSD"/>
<dbReference type="PhylomeDB" id="O74892"/>
<dbReference type="Reactome" id="R-SPO-156827">
    <property type="pathway name" value="L13a-mediated translational silencing of Ceruloplasmin expression"/>
</dbReference>
<dbReference type="Reactome" id="R-SPO-1799339">
    <property type="pathway name" value="SRP-dependent cotranslational protein targeting to membrane"/>
</dbReference>
<dbReference type="Reactome" id="R-SPO-3214858">
    <property type="pathway name" value="RMTs methylate histone arginines"/>
</dbReference>
<dbReference type="Reactome" id="R-SPO-6791226">
    <property type="pathway name" value="Major pathway of rRNA processing in the nucleolus and cytosol"/>
</dbReference>
<dbReference type="Reactome" id="R-SPO-72649">
    <property type="pathway name" value="Translation initiation complex formation"/>
</dbReference>
<dbReference type="Reactome" id="R-SPO-72689">
    <property type="pathway name" value="Formation of a pool of free 40S subunits"/>
</dbReference>
<dbReference type="Reactome" id="R-SPO-72695">
    <property type="pathway name" value="Formation of the ternary complex, and subsequently, the 43S complex"/>
</dbReference>
<dbReference type="Reactome" id="R-SPO-72702">
    <property type="pathway name" value="Ribosomal scanning and start codon recognition"/>
</dbReference>
<dbReference type="Reactome" id="R-SPO-72706">
    <property type="pathway name" value="GTP hydrolysis and joining of the 60S ribosomal subunit"/>
</dbReference>
<dbReference type="Reactome" id="R-SPO-8876725">
    <property type="pathway name" value="Protein methylation"/>
</dbReference>
<dbReference type="Reactome" id="R-SPO-975956">
    <property type="pathway name" value="Nonsense Mediated Decay (NMD) independent of the Exon Junction Complex (EJC)"/>
</dbReference>
<dbReference type="Reactome" id="R-SPO-975957">
    <property type="pathway name" value="Nonsense Mediated Decay (NMD) enhanced by the Exon Junction Complex (EJC)"/>
</dbReference>
<dbReference type="PRO" id="PR:O74892"/>
<dbReference type="Proteomes" id="UP000002485">
    <property type="component" value="Chromosome III"/>
</dbReference>
<dbReference type="GO" id="GO:0005829">
    <property type="term" value="C:cytosol"/>
    <property type="evidence" value="ECO:0007005"/>
    <property type="project" value="PomBase"/>
</dbReference>
<dbReference type="GO" id="GO:0022627">
    <property type="term" value="C:cytosolic small ribosomal subunit"/>
    <property type="evidence" value="ECO:0000269"/>
    <property type="project" value="PomBase"/>
</dbReference>
<dbReference type="GO" id="GO:0032040">
    <property type="term" value="C:small-subunit processome"/>
    <property type="evidence" value="ECO:0000266"/>
    <property type="project" value="PomBase"/>
</dbReference>
<dbReference type="GO" id="GO:0003723">
    <property type="term" value="F:RNA binding"/>
    <property type="evidence" value="ECO:0007669"/>
    <property type="project" value="InterPro"/>
</dbReference>
<dbReference type="GO" id="GO:0003735">
    <property type="term" value="F:structural constituent of ribosome"/>
    <property type="evidence" value="ECO:0000318"/>
    <property type="project" value="GO_Central"/>
</dbReference>
<dbReference type="GO" id="GO:0002181">
    <property type="term" value="P:cytoplasmic translation"/>
    <property type="evidence" value="ECO:0000266"/>
    <property type="project" value="PomBase"/>
</dbReference>
<dbReference type="GO" id="GO:0006412">
    <property type="term" value="P:translation"/>
    <property type="evidence" value="ECO:0000318"/>
    <property type="project" value="GO_Central"/>
</dbReference>
<dbReference type="FunFam" id="3.30.160.20:FF:000002">
    <property type="entry name" value="40S ribosomal protein S2"/>
    <property type="match status" value="1"/>
</dbReference>
<dbReference type="FunFam" id="3.30.230.10:FF:000004">
    <property type="entry name" value="40S ribosomal protein S2"/>
    <property type="match status" value="1"/>
</dbReference>
<dbReference type="Gene3D" id="3.30.160.20">
    <property type="match status" value="1"/>
</dbReference>
<dbReference type="Gene3D" id="3.30.230.10">
    <property type="match status" value="1"/>
</dbReference>
<dbReference type="InterPro" id="IPR020568">
    <property type="entry name" value="Ribosomal_Su5_D2-typ_SF"/>
</dbReference>
<dbReference type="InterPro" id="IPR000851">
    <property type="entry name" value="Ribosomal_uS5"/>
</dbReference>
<dbReference type="InterPro" id="IPR005324">
    <property type="entry name" value="Ribosomal_uS5_C"/>
</dbReference>
<dbReference type="InterPro" id="IPR005711">
    <property type="entry name" value="Ribosomal_uS5_euk/arc"/>
</dbReference>
<dbReference type="InterPro" id="IPR013810">
    <property type="entry name" value="Ribosomal_uS5_N"/>
</dbReference>
<dbReference type="InterPro" id="IPR018192">
    <property type="entry name" value="Ribosomal_uS5_N_CS"/>
</dbReference>
<dbReference type="InterPro" id="IPR014721">
    <property type="entry name" value="Ribsml_uS5_D2-typ_fold_subgr"/>
</dbReference>
<dbReference type="NCBIfam" id="TIGR01020">
    <property type="entry name" value="uS5_euk_arch"/>
    <property type="match status" value="1"/>
</dbReference>
<dbReference type="PANTHER" id="PTHR13718:SF4">
    <property type="entry name" value="40S RIBOSOMAL PROTEIN S2"/>
    <property type="match status" value="1"/>
</dbReference>
<dbReference type="PANTHER" id="PTHR13718">
    <property type="entry name" value="RIBOSOMAL S SUBUNIT"/>
    <property type="match status" value="1"/>
</dbReference>
<dbReference type="Pfam" id="PF00333">
    <property type="entry name" value="Ribosomal_S5"/>
    <property type="match status" value="1"/>
</dbReference>
<dbReference type="Pfam" id="PF03719">
    <property type="entry name" value="Ribosomal_S5_C"/>
    <property type="match status" value="1"/>
</dbReference>
<dbReference type="SUPFAM" id="SSF54768">
    <property type="entry name" value="dsRNA-binding domain-like"/>
    <property type="match status" value="1"/>
</dbReference>
<dbReference type="SUPFAM" id="SSF54211">
    <property type="entry name" value="Ribosomal protein S5 domain 2-like"/>
    <property type="match status" value="1"/>
</dbReference>
<dbReference type="PROSITE" id="PS00585">
    <property type="entry name" value="RIBOSOMAL_S5"/>
    <property type="match status" value="1"/>
</dbReference>
<dbReference type="PROSITE" id="PS50881">
    <property type="entry name" value="S5_DSRBD"/>
    <property type="match status" value="1"/>
</dbReference>
<keyword id="KW-0002">3D-structure</keyword>
<keyword id="KW-0963">Cytoplasm</keyword>
<keyword id="KW-1185">Reference proteome</keyword>
<keyword id="KW-0687">Ribonucleoprotein</keyword>
<keyword id="KW-0689">Ribosomal protein</keyword>
<protein>
    <recommendedName>
        <fullName evidence="5">Small ribosomal subunit protein uS5</fullName>
    </recommendedName>
    <alternativeName>
        <fullName>40S ribosomal protein S2</fullName>
    </alternativeName>
</protein>
<reference key="1">
    <citation type="journal article" date="2002" name="Nature">
        <title>The genome sequence of Schizosaccharomyces pombe.</title>
        <authorList>
            <person name="Wood V."/>
            <person name="Gwilliam R."/>
            <person name="Rajandream M.A."/>
            <person name="Lyne M.H."/>
            <person name="Lyne R."/>
            <person name="Stewart A."/>
            <person name="Sgouros J.G."/>
            <person name="Peat N."/>
            <person name="Hayles J."/>
            <person name="Baker S.G."/>
            <person name="Basham D."/>
            <person name="Bowman S."/>
            <person name="Brooks K."/>
            <person name="Brown D."/>
            <person name="Brown S."/>
            <person name="Chillingworth T."/>
            <person name="Churcher C.M."/>
            <person name="Collins M."/>
            <person name="Connor R."/>
            <person name="Cronin A."/>
            <person name="Davis P."/>
            <person name="Feltwell T."/>
            <person name="Fraser A."/>
            <person name="Gentles S."/>
            <person name="Goble A."/>
            <person name="Hamlin N."/>
            <person name="Harris D.E."/>
            <person name="Hidalgo J."/>
            <person name="Hodgson G."/>
            <person name="Holroyd S."/>
            <person name="Hornsby T."/>
            <person name="Howarth S."/>
            <person name="Huckle E.J."/>
            <person name="Hunt S."/>
            <person name="Jagels K."/>
            <person name="James K.D."/>
            <person name="Jones L."/>
            <person name="Jones M."/>
            <person name="Leather S."/>
            <person name="McDonald S."/>
            <person name="McLean J."/>
            <person name="Mooney P."/>
            <person name="Moule S."/>
            <person name="Mungall K.L."/>
            <person name="Murphy L.D."/>
            <person name="Niblett D."/>
            <person name="Odell C."/>
            <person name="Oliver K."/>
            <person name="O'Neil S."/>
            <person name="Pearson D."/>
            <person name="Quail M.A."/>
            <person name="Rabbinowitsch E."/>
            <person name="Rutherford K.M."/>
            <person name="Rutter S."/>
            <person name="Saunders D."/>
            <person name="Seeger K."/>
            <person name="Sharp S."/>
            <person name="Skelton J."/>
            <person name="Simmonds M.N."/>
            <person name="Squares R."/>
            <person name="Squares S."/>
            <person name="Stevens K."/>
            <person name="Taylor K."/>
            <person name="Taylor R.G."/>
            <person name="Tivey A."/>
            <person name="Walsh S.V."/>
            <person name="Warren T."/>
            <person name="Whitehead S."/>
            <person name="Woodward J.R."/>
            <person name="Volckaert G."/>
            <person name="Aert R."/>
            <person name="Robben J."/>
            <person name="Grymonprez B."/>
            <person name="Weltjens I."/>
            <person name="Vanstreels E."/>
            <person name="Rieger M."/>
            <person name="Schaefer M."/>
            <person name="Mueller-Auer S."/>
            <person name="Gabel C."/>
            <person name="Fuchs M."/>
            <person name="Duesterhoeft A."/>
            <person name="Fritzc C."/>
            <person name="Holzer E."/>
            <person name="Moestl D."/>
            <person name="Hilbert H."/>
            <person name="Borzym K."/>
            <person name="Langer I."/>
            <person name="Beck A."/>
            <person name="Lehrach H."/>
            <person name="Reinhardt R."/>
            <person name="Pohl T.M."/>
            <person name="Eger P."/>
            <person name="Zimmermann W."/>
            <person name="Wedler H."/>
            <person name="Wambutt R."/>
            <person name="Purnelle B."/>
            <person name="Goffeau A."/>
            <person name="Cadieu E."/>
            <person name="Dreano S."/>
            <person name="Gloux S."/>
            <person name="Lelaure V."/>
            <person name="Mottier S."/>
            <person name="Galibert F."/>
            <person name="Aves S.J."/>
            <person name="Xiang Z."/>
            <person name="Hunt C."/>
            <person name="Moore K."/>
            <person name="Hurst S.M."/>
            <person name="Lucas M."/>
            <person name="Rochet M."/>
            <person name="Gaillardin C."/>
            <person name="Tallada V.A."/>
            <person name="Garzon A."/>
            <person name="Thode G."/>
            <person name="Daga R.R."/>
            <person name="Cruzado L."/>
            <person name="Jimenez J."/>
            <person name="Sanchez M."/>
            <person name="del Rey F."/>
            <person name="Benito J."/>
            <person name="Dominguez A."/>
            <person name="Revuelta J.L."/>
            <person name="Moreno S."/>
            <person name="Armstrong J."/>
            <person name="Forsburg S.L."/>
            <person name="Cerutti L."/>
            <person name="Lowe T."/>
            <person name="McCombie W.R."/>
            <person name="Paulsen I."/>
            <person name="Potashkin J."/>
            <person name="Shpakovski G.V."/>
            <person name="Ussery D."/>
            <person name="Barrell B.G."/>
            <person name="Nurse P."/>
        </authorList>
    </citation>
    <scope>NUCLEOTIDE SEQUENCE [LARGE SCALE GENOMIC DNA]</scope>
    <source>
        <strain>972 / ATCC 24843</strain>
    </source>
</reference>
<reference key="2">
    <citation type="journal article" date="2006" name="Nat. Biotechnol.">
        <title>ORFeome cloning and global analysis of protein localization in the fission yeast Schizosaccharomyces pombe.</title>
        <authorList>
            <person name="Matsuyama A."/>
            <person name="Arai R."/>
            <person name="Yashiroda Y."/>
            <person name="Shirai A."/>
            <person name="Kamata A."/>
            <person name="Sekido S."/>
            <person name="Kobayashi Y."/>
            <person name="Hashimoto A."/>
            <person name="Hamamoto M."/>
            <person name="Hiraoka Y."/>
            <person name="Horinouchi S."/>
            <person name="Yoshida M."/>
        </authorList>
    </citation>
    <scope>SUBCELLULAR LOCATION [LARGE SCALE ANALYSIS]</scope>
</reference>
<sequence>MAESAPRGFGRGGRGGRGRGRGRRGAKRDEEKEWVPVTKLGRLVKAGKIKSIEEIYLYSLPIKEYQIVDYFLPRLNDEVMKVVPVQKQTRAGQRTRFKAFVVIGDSDGHVGLGIKCAKEVATAIRGAIIMGKLSIMPIRRGYWGTALGDPHTVPVKVSGKCGSVTVRLVPAPRGAGLVAAPVTKRFLQLAGIEDCYTQSRGSTKTLGNFVKAAFAAASLTYGILTPNLWAERPFGQTPIEEYADILMQTEKKY</sequence>
<accession>O74892</accession>
<comment type="function">
    <text evidence="1">Component of the ribosome, a large ribonucleoprotein complex responsible for the synthesis of proteins in the cell. The small ribosomal subunit (SSU) binds messenger RNAs (mRNAs) and translates the encoded message by selecting cognate aminoacyl-transfer RNA (tRNA) molecules. The large subunit (LSU) contains the ribosomal catalytic site termed the peptidyl transferase center (PTC), which catalyzes the formation of peptide bonds, thereby polymerizing the amino acids delivered by tRNAs into a polypeptide chain. The nascent polypeptides leave the ribosome through a tunnel in the LSU and interact with protein factors that function in enzymatic processing, targeting, and the membrane insertion of nascent chains at the exit of the ribosomal tunnel. Plays a role in the assembly and function of the 40S ribosomal subunit. Mutations in this protein affects the control of translational fidelity. Involved in nucleolar processing of pre-18S ribosomal RNA and ribosome assembly.</text>
</comment>
<comment type="function">
    <text evidence="1">Component of the ribosome, a large ribonucleoprotein complex responsible for the synthesis of proteins in the cell. The small ribosomal subunit (SSU) binds messenger RNAs (mRNAs) and translates the encoded message by selecting cognate aminoacyl-transfer RNA (tRNA) molecules. The large subunit (LSU) contains the ribosomal catalytic site termed the peptidyl transferase center (PTC), which catalyzes the formation of peptide bonds, thereby polymerizing the amino acids delivered by tRNAs into a polypeptide chain. The nascent polypeptides leave the ribosome through a tunnel in the LSU and interact with protein factors that function in enzymatic processing, targeting, and the membrane insertion of nascent chains at the exit of the ribosomal tunnel. uS5 is important for the assembly and function of the 40S ribosomal subunit. Mutations in this protein affects the control of translational fidelity. Involved in nucleolar processing of pre-18S ribosomal RNA and ribosome assembly.</text>
</comment>
<comment type="subunit">
    <text evidence="1">Component of the small ribosomal subunit (SSU). Mature yeast ribosomes consist of a small (40S) and a large (60S) subunit. The 40S small subunit contains 1 molecule of ribosomal RNA (18S rRNA) and at least 33 different proteins. The large 60S subunit contains 3 rRNA molecules (25S, 5.8S and 5S rRNA) and at least 46 different proteins. Interacts with snoRNA U3. Interacts with MPP10. Component of the ribosomal small subunit (SSU) processome composed of at least 40 protein subunits and snoRNA U3.</text>
</comment>
<comment type="interaction">
    <interactant intactId="EBI-367715">
        <id>O74892</id>
    </interactant>
    <interactant intactId="EBI-367706">
        <id>O13648</id>
        <label>rmt3</label>
    </interactant>
    <organismsDiffer>false</organismsDiffer>
    <experiments>2</experiments>
</comment>
<comment type="subcellular location">
    <subcellularLocation>
        <location evidence="4">Cytoplasm</location>
    </subcellularLocation>
</comment>
<comment type="similarity">
    <text evidence="5">Belongs to the universal ribosomal protein uS5 family.</text>
</comment>
<name>RS2_SCHPO</name>
<evidence type="ECO:0000250" key="1">
    <source>
        <dbReference type="UniProtKB" id="P25443"/>
    </source>
</evidence>
<evidence type="ECO:0000255" key="2">
    <source>
        <dbReference type="PROSITE-ProRule" id="PRU00268"/>
    </source>
</evidence>
<evidence type="ECO:0000256" key="3">
    <source>
        <dbReference type="SAM" id="MobiDB-lite"/>
    </source>
</evidence>
<evidence type="ECO:0000269" key="4">
    <source>
    </source>
</evidence>
<evidence type="ECO:0000305" key="5"/>
<feature type="chain" id="PRO_0000131683" description="Small ribosomal subunit protein uS5">
    <location>
        <begin position="1"/>
        <end position="253"/>
    </location>
</feature>
<feature type="domain" description="S5 DRBM" evidence="2">
    <location>
        <begin position="75"/>
        <end position="138"/>
    </location>
</feature>
<feature type="region of interest" description="Disordered" evidence="3">
    <location>
        <begin position="1"/>
        <end position="30"/>
    </location>
</feature>
<feature type="compositionally biased region" description="Basic residues" evidence="3">
    <location>
        <begin position="14"/>
        <end position="26"/>
    </location>
</feature>